<organism>
    <name type="scientific">Exiguobacterium sibiricum (strain DSM 17290 / CCUG 55495 / CIP 109462 / JCM 13490 / 255-15)</name>
    <dbReference type="NCBI Taxonomy" id="262543"/>
    <lineage>
        <taxon>Bacteria</taxon>
        <taxon>Bacillati</taxon>
        <taxon>Bacillota</taxon>
        <taxon>Bacilli</taxon>
        <taxon>Bacillales</taxon>
        <taxon>Bacillales Family XII. Incertae Sedis</taxon>
        <taxon>Exiguobacterium</taxon>
    </lineage>
</organism>
<gene>
    <name evidence="1" type="primary">rpmC</name>
    <name type="ordered locus">Exig_0104</name>
</gene>
<feature type="chain" id="PRO_1000121774" description="Large ribosomal subunit protein uL29">
    <location>
        <begin position="1"/>
        <end position="67"/>
    </location>
</feature>
<reference key="1">
    <citation type="submission" date="2008-04" db="EMBL/GenBank/DDBJ databases">
        <title>Complete sequence of chromosome of Exiguobacterium sibiricum 255-15.</title>
        <authorList>
            <consortium name="US DOE Joint Genome Institute"/>
            <person name="Copeland A."/>
            <person name="Lucas S."/>
            <person name="Lapidus A."/>
            <person name="Glavina del Rio T."/>
            <person name="Dalin E."/>
            <person name="Tice H."/>
            <person name="Bruce D."/>
            <person name="Goodwin L."/>
            <person name="Pitluck S."/>
            <person name="Kiss H."/>
            <person name="Chertkov O."/>
            <person name="Monk C."/>
            <person name="Brettin T."/>
            <person name="Detter J.C."/>
            <person name="Han C."/>
            <person name="Kuske C.R."/>
            <person name="Schmutz J."/>
            <person name="Larimer F."/>
            <person name="Land M."/>
            <person name="Hauser L."/>
            <person name="Kyrpides N."/>
            <person name="Mikhailova N."/>
            <person name="Vishnivetskaya T."/>
            <person name="Rodrigues D.F."/>
            <person name="Gilichinsky D."/>
            <person name="Tiedje J."/>
            <person name="Richardson P."/>
        </authorList>
    </citation>
    <scope>NUCLEOTIDE SEQUENCE [LARGE SCALE GENOMIC DNA]</scope>
    <source>
        <strain>DSM 17290 / CCUG 55495 / CIP 109462 / JCM 13490 / 255-15</strain>
    </source>
</reference>
<protein>
    <recommendedName>
        <fullName evidence="1">Large ribosomal subunit protein uL29</fullName>
    </recommendedName>
    <alternativeName>
        <fullName evidence="2">50S ribosomal protein L29</fullName>
    </alternativeName>
</protein>
<name>RL29_EXIS2</name>
<evidence type="ECO:0000255" key="1">
    <source>
        <dbReference type="HAMAP-Rule" id="MF_00374"/>
    </source>
</evidence>
<evidence type="ECO:0000305" key="2"/>
<proteinExistence type="inferred from homology"/>
<keyword id="KW-1185">Reference proteome</keyword>
<keyword id="KW-0687">Ribonucleoprotein</keyword>
<keyword id="KW-0689">Ribosomal protein</keyword>
<dbReference type="EMBL" id="CP001022">
    <property type="protein sequence ID" value="ACB59591.1"/>
    <property type="molecule type" value="Genomic_DNA"/>
</dbReference>
<dbReference type="RefSeq" id="WP_012369017.1">
    <property type="nucleotide sequence ID" value="NC_010556.1"/>
</dbReference>
<dbReference type="SMR" id="B1YGV8"/>
<dbReference type="STRING" id="262543.Exig_0104"/>
<dbReference type="GeneID" id="90838850"/>
<dbReference type="KEGG" id="esi:Exig_0104"/>
<dbReference type="eggNOG" id="COG0255">
    <property type="taxonomic scope" value="Bacteria"/>
</dbReference>
<dbReference type="HOGENOM" id="CLU_158491_5_2_9"/>
<dbReference type="OrthoDB" id="9815192at2"/>
<dbReference type="Proteomes" id="UP000001681">
    <property type="component" value="Chromosome"/>
</dbReference>
<dbReference type="GO" id="GO:0022625">
    <property type="term" value="C:cytosolic large ribosomal subunit"/>
    <property type="evidence" value="ECO:0007669"/>
    <property type="project" value="TreeGrafter"/>
</dbReference>
<dbReference type="GO" id="GO:0003735">
    <property type="term" value="F:structural constituent of ribosome"/>
    <property type="evidence" value="ECO:0007669"/>
    <property type="project" value="InterPro"/>
</dbReference>
<dbReference type="GO" id="GO:0006412">
    <property type="term" value="P:translation"/>
    <property type="evidence" value="ECO:0007669"/>
    <property type="project" value="UniProtKB-UniRule"/>
</dbReference>
<dbReference type="CDD" id="cd00427">
    <property type="entry name" value="Ribosomal_L29_HIP"/>
    <property type="match status" value="1"/>
</dbReference>
<dbReference type="FunFam" id="1.10.287.310:FF:000001">
    <property type="entry name" value="50S ribosomal protein L29"/>
    <property type="match status" value="1"/>
</dbReference>
<dbReference type="Gene3D" id="1.10.287.310">
    <property type="match status" value="1"/>
</dbReference>
<dbReference type="HAMAP" id="MF_00374">
    <property type="entry name" value="Ribosomal_uL29"/>
    <property type="match status" value="1"/>
</dbReference>
<dbReference type="InterPro" id="IPR050063">
    <property type="entry name" value="Ribosomal_protein_uL29"/>
</dbReference>
<dbReference type="InterPro" id="IPR001854">
    <property type="entry name" value="Ribosomal_uL29"/>
</dbReference>
<dbReference type="InterPro" id="IPR018254">
    <property type="entry name" value="Ribosomal_uL29_CS"/>
</dbReference>
<dbReference type="InterPro" id="IPR036049">
    <property type="entry name" value="Ribosomal_uL29_sf"/>
</dbReference>
<dbReference type="NCBIfam" id="TIGR00012">
    <property type="entry name" value="L29"/>
    <property type="match status" value="1"/>
</dbReference>
<dbReference type="PANTHER" id="PTHR10916">
    <property type="entry name" value="60S RIBOSOMAL PROTEIN L35/50S RIBOSOMAL PROTEIN L29"/>
    <property type="match status" value="1"/>
</dbReference>
<dbReference type="PANTHER" id="PTHR10916:SF0">
    <property type="entry name" value="LARGE RIBOSOMAL SUBUNIT PROTEIN UL29C"/>
    <property type="match status" value="1"/>
</dbReference>
<dbReference type="Pfam" id="PF00831">
    <property type="entry name" value="Ribosomal_L29"/>
    <property type="match status" value="1"/>
</dbReference>
<dbReference type="SUPFAM" id="SSF46561">
    <property type="entry name" value="Ribosomal protein L29 (L29p)"/>
    <property type="match status" value="1"/>
</dbReference>
<dbReference type="PROSITE" id="PS00579">
    <property type="entry name" value="RIBOSOMAL_L29"/>
    <property type="match status" value="1"/>
</dbReference>
<sequence length="67" mass="7725">MKATDLRQQTTEELNGKVGSWKEELFNLRFQLATGQLENPARIREVRKSIARAKTVLRERELGINNA</sequence>
<comment type="similarity">
    <text evidence="1">Belongs to the universal ribosomal protein uL29 family.</text>
</comment>
<accession>B1YGV8</accession>